<accession>A8AZK6</accession>
<dbReference type="EMBL" id="CP000725">
    <property type="protein sequence ID" value="ABV10395.1"/>
    <property type="molecule type" value="Genomic_DNA"/>
</dbReference>
<dbReference type="RefSeq" id="WP_008809898.1">
    <property type="nucleotide sequence ID" value="NC_009785.1"/>
</dbReference>
<dbReference type="SMR" id="A8AZK6"/>
<dbReference type="STRING" id="467705.SGO_1966"/>
<dbReference type="KEGG" id="sgo:SGO_1966"/>
<dbReference type="eggNOG" id="COG0200">
    <property type="taxonomic scope" value="Bacteria"/>
</dbReference>
<dbReference type="HOGENOM" id="CLU_055188_4_2_9"/>
<dbReference type="Proteomes" id="UP000001131">
    <property type="component" value="Chromosome"/>
</dbReference>
<dbReference type="GO" id="GO:0022625">
    <property type="term" value="C:cytosolic large ribosomal subunit"/>
    <property type="evidence" value="ECO:0007669"/>
    <property type="project" value="TreeGrafter"/>
</dbReference>
<dbReference type="GO" id="GO:0019843">
    <property type="term" value="F:rRNA binding"/>
    <property type="evidence" value="ECO:0007669"/>
    <property type="project" value="UniProtKB-UniRule"/>
</dbReference>
<dbReference type="GO" id="GO:0003735">
    <property type="term" value="F:structural constituent of ribosome"/>
    <property type="evidence" value="ECO:0007669"/>
    <property type="project" value="InterPro"/>
</dbReference>
<dbReference type="GO" id="GO:0006412">
    <property type="term" value="P:translation"/>
    <property type="evidence" value="ECO:0007669"/>
    <property type="project" value="UniProtKB-UniRule"/>
</dbReference>
<dbReference type="FunFam" id="3.100.10.10:FF:000004">
    <property type="entry name" value="50S ribosomal protein L15"/>
    <property type="match status" value="1"/>
</dbReference>
<dbReference type="Gene3D" id="3.100.10.10">
    <property type="match status" value="1"/>
</dbReference>
<dbReference type="HAMAP" id="MF_01341">
    <property type="entry name" value="Ribosomal_uL15"/>
    <property type="match status" value="1"/>
</dbReference>
<dbReference type="InterPro" id="IPR030878">
    <property type="entry name" value="Ribosomal_uL15"/>
</dbReference>
<dbReference type="InterPro" id="IPR021131">
    <property type="entry name" value="Ribosomal_uL15/eL18"/>
</dbReference>
<dbReference type="InterPro" id="IPR036227">
    <property type="entry name" value="Ribosomal_uL15/eL18_sf"/>
</dbReference>
<dbReference type="InterPro" id="IPR005749">
    <property type="entry name" value="Ribosomal_uL15_bac-type"/>
</dbReference>
<dbReference type="InterPro" id="IPR001196">
    <property type="entry name" value="Ribosomal_uL15_CS"/>
</dbReference>
<dbReference type="NCBIfam" id="TIGR01071">
    <property type="entry name" value="rplO_bact"/>
    <property type="match status" value="1"/>
</dbReference>
<dbReference type="PANTHER" id="PTHR12934">
    <property type="entry name" value="50S RIBOSOMAL PROTEIN L15"/>
    <property type="match status" value="1"/>
</dbReference>
<dbReference type="PANTHER" id="PTHR12934:SF11">
    <property type="entry name" value="LARGE RIBOSOMAL SUBUNIT PROTEIN UL15M"/>
    <property type="match status" value="1"/>
</dbReference>
<dbReference type="Pfam" id="PF00828">
    <property type="entry name" value="Ribosomal_L27A"/>
    <property type="match status" value="1"/>
</dbReference>
<dbReference type="SUPFAM" id="SSF52080">
    <property type="entry name" value="Ribosomal proteins L15p and L18e"/>
    <property type="match status" value="1"/>
</dbReference>
<dbReference type="PROSITE" id="PS00475">
    <property type="entry name" value="RIBOSOMAL_L15"/>
    <property type="match status" value="1"/>
</dbReference>
<gene>
    <name evidence="1" type="primary">rplO</name>
    <name type="ordered locus">SGO_1966</name>
</gene>
<sequence length="146" mass="15415">MKLHELQPAAGSRKVRNRVGRGTSSGNGKTAGRGQKGQKARSGGGVRLGFEGGQTPLFRRLPKRGFLNVNRKEYAIVNLDQLNAFEDGAEVTPVVLVESGIVKAEKSGVKILGNGELTKKLTVKAAKFSKSAEEAITAKGGSVEVI</sequence>
<comment type="function">
    <text evidence="1">Binds to the 23S rRNA.</text>
</comment>
<comment type="subunit">
    <text evidence="1">Part of the 50S ribosomal subunit.</text>
</comment>
<comment type="similarity">
    <text evidence="1">Belongs to the universal ribosomal protein uL15 family.</text>
</comment>
<keyword id="KW-1185">Reference proteome</keyword>
<keyword id="KW-0687">Ribonucleoprotein</keyword>
<keyword id="KW-0689">Ribosomal protein</keyword>
<keyword id="KW-0694">RNA-binding</keyword>
<keyword id="KW-0699">rRNA-binding</keyword>
<reference key="1">
    <citation type="journal article" date="2007" name="J. Bacteriol.">
        <title>Genome-wide transcriptional changes in Streptococcus gordonii in response to competence signaling peptide.</title>
        <authorList>
            <person name="Vickerman M.M."/>
            <person name="Iobst S."/>
            <person name="Jesionowski A.M."/>
            <person name="Gill S.R."/>
        </authorList>
    </citation>
    <scope>NUCLEOTIDE SEQUENCE [LARGE SCALE GENOMIC DNA]</scope>
    <source>
        <strain>Challis / ATCC 35105 / BCRC 15272 / CH1 / DL1 / V288</strain>
    </source>
</reference>
<name>RL15_STRGC</name>
<evidence type="ECO:0000255" key="1">
    <source>
        <dbReference type="HAMAP-Rule" id="MF_01341"/>
    </source>
</evidence>
<evidence type="ECO:0000256" key="2">
    <source>
        <dbReference type="SAM" id="MobiDB-lite"/>
    </source>
</evidence>
<evidence type="ECO:0000305" key="3"/>
<feature type="chain" id="PRO_1000086737" description="Large ribosomal subunit protein uL15">
    <location>
        <begin position="1"/>
        <end position="146"/>
    </location>
</feature>
<feature type="region of interest" description="Disordered" evidence="2">
    <location>
        <begin position="1"/>
        <end position="51"/>
    </location>
</feature>
<feature type="compositionally biased region" description="Gly residues" evidence="2">
    <location>
        <begin position="23"/>
        <end position="35"/>
    </location>
</feature>
<feature type="compositionally biased region" description="Gly residues" evidence="2">
    <location>
        <begin position="42"/>
        <end position="51"/>
    </location>
</feature>
<organism>
    <name type="scientific">Streptococcus gordonii (strain Challis / ATCC 35105 / BCRC 15272 / CH1 / DL1 / V288)</name>
    <dbReference type="NCBI Taxonomy" id="467705"/>
    <lineage>
        <taxon>Bacteria</taxon>
        <taxon>Bacillati</taxon>
        <taxon>Bacillota</taxon>
        <taxon>Bacilli</taxon>
        <taxon>Lactobacillales</taxon>
        <taxon>Streptococcaceae</taxon>
        <taxon>Streptococcus</taxon>
    </lineage>
</organism>
<protein>
    <recommendedName>
        <fullName evidence="1">Large ribosomal subunit protein uL15</fullName>
    </recommendedName>
    <alternativeName>
        <fullName evidence="3">50S ribosomal protein L15</fullName>
    </alternativeName>
</protein>
<proteinExistence type="inferred from homology"/>